<name>OPSD_CORAU</name>
<feature type="chain" id="PRO_0000197662" description="Rhodopsin">
    <location>
        <begin position="1" status="less than"/>
        <end position="131" status="greater than"/>
    </location>
</feature>
<feature type="topological domain" description="Extracellular" evidence="1">
    <location>
        <begin position="1" status="less than"/>
        <end position="16"/>
    </location>
</feature>
<feature type="transmembrane region" description="Helical; Name=5" evidence="1">
    <location>
        <begin position="17"/>
        <end position="38"/>
    </location>
</feature>
<feature type="topological domain" description="Cytoplasmic" evidence="1">
    <location>
        <begin position="39"/>
        <end position="66"/>
    </location>
</feature>
<feature type="transmembrane region" description="Helical; Name=6" evidence="1">
    <location>
        <begin position="67"/>
        <end position="88"/>
    </location>
</feature>
<feature type="topological domain" description="Extracellular" evidence="1">
    <location>
        <begin position="89"/>
        <end position="100"/>
    </location>
</feature>
<feature type="transmembrane region" description="Helical; Name=7" evidence="1">
    <location>
        <begin position="101"/>
        <end position="122"/>
    </location>
</feature>
<feature type="topological domain" description="Cytoplasmic" evidence="1">
    <location>
        <begin position="123"/>
        <end position="131" status="greater than"/>
    </location>
</feature>
<feature type="modified residue" description="N6-(retinylidene)lysine" evidence="1">
    <location>
        <position position="110"/>
    </location>
</feature>
<feature type="glycosylation site" description="N-linked (GlcNAc...) asparagine" evidence="5">
    <location>
        <position position="14"/>
    </location>
</feature>
<feature type="non-terminal residue">
    <location>
        <position position="1"/>
    </location>
</feature>
<feature type="non-terminal residue">
    <location>
        <position position="131"/>
    </location>
</feature>
<dbReference type="EMBL" id="L42954">
    <property type="protein sequence ID" value="AAA96438.1"/>
    <property type="molecule type" value="Genomic_DNA"/>
</dbReference>
<dbReference type="SMR" id="Q90305"/>
<dbReference type="GlyCosmos" id="Q90305">
    <property type="glycosylation" value="1 site, No reported glycans"/>
</dbReference>
<dbReference type="GO" id="GO:0016020">
    <property type="term" value="C:membrane"/>
    <property type="evidence" value="ECO:0000250"/>
    <property type="project" value="UniProtKB"/>
</dbReference>
<dbReference type="GO" id="GO:0097381">
    <property type="term" value="C:photoreceptor disc membrane"/>
    <property type="evidence" value="ECO:0000250"/>
    <property type="project" value="UniProtKB"/>
</dbReference>
<dbReference type="GO" id="GO:0005886">
    <property type="term" value="C:plasma membrane"/>
    <property type="evidence" value="ECO:0000250"/>
    <property type="project" value="UniProtKB"/>
</dbReference>
<dbReference type="GO" id="GO:0005502">
    <property type="term" value="F:11-cis retinal binding"/>
    <property type="evidence" value="ECO:0000250"/>
    <property type="project" value="UniProtKB"/>
</dbReference>
<dbReference type="GO" id="GO:0008020">
    <property type="term" value="F:G protein-coupled photoreceptor activity"/>
    <property type="evidence" value="ECO:0000250"/>
    <property type="project" value="UniProtKB"/>
</dbReference>
<dbReference type="GO" id="GO:0016038">
    <property type="term" value="P:absorption of visible light"/>
    <property type="evidence" value="ECO:0000250"/>
    <property type="project" value="UniProtKB"/>
</dbReference>
<dbReference type="GO" id="GO:0016056">
    <property type="term" value="P:G protein-coupled opsin signaling pathway"/>
    <property type="evidence" value="ECO:0000250"/>
    <property type="project" value="UniProtKB"/>
</dbReference>
<dbReference type="GO" id="GO:0007601">
    <property type="term" value="P:visual perception"/>
    <property type="evidence" value="ECO:0007669"/>
    <property type="project" value="UniProtKB-KW"/>
</dbReference>
<dbReference type="Gene3D" id="1.20.1070.10">
    <property type="entry name" value="Rhodopsin 7-helix transmembrane proteins"/>
    <property type="match status" value="1"/>
</dbReference>
<dbReference type="InterPro" id="IPR050125">
    <property type="entry name" value="GPCR_opsins"/>
</dbReference>
<dbReference type="InterPro" id="IPR000276">
    <property type="entry name" value="GPCR_Rhodpsn"/>
</dbReference>
<dbReference type="InterPro" id="IPR017452">
    <property type="entry name" value="GPCR_Rhodpsn_7TM"/>
</dbReference>
<dbReference type="InterPro" id="IPR027430">
    <property type="entry name" value="Retinal_BS"/>
</dbReference>
<dbReference type="InterPro" id="IPR000732">
    <property type="entry name" value="Rhodopsin"/>
</dbReference>
<dbReference type="PANTHER" id="PTHR24240">
    <property type="entry name" value="OPSIN"/>
    <property type="match status" value="1"/>
</dbReference>
<dbReference type="Pfam" id="PF00001">
    <property type="entry name" value="7tm_1"/>
    <property type="match status" value="1"/>
</dbReference>
<dbReference type="PRINTS" id="PR00237">
    <property type="entry name" value="GPCRRHODOPSN"/>
</dbReference>
<dbReference type="PRINTS" id="PR00579">
    <property type="entry name" value="RHODOPSIN"/>
</dbReference>
<dbReference type="SUPFAM" id="SSF81321">
    <property type="entry name" value="Family A G protein-coupled receptor-like"/>
    <property type="match status" value="1"/>
</dbReference>
<dbReference type="PROSITE" id="PS50262">
    <property type="entry name" value="G_PROTEIN_RECEP_F1_2"/>
    <property type="match status" value="1"/>
</dbReference>
<dbReference type="PROSITE" id="PS00238">
    <property type="entry name" value="OPSIN"/>
    <property type="match status" value="1"/>
</dbReference>
<evidence type="ECO:0000250" key="1">
    <source>
        <dbReference type="UniProtKB" id="P02699"/>
    </source>
</evidence>
<evidence type="ECO:0000250" key="2">
    <source>
        <dbReference type="UniProtKB" id="P08100"/>
    </source>
</evidence>
<evidence type="ECO:0000250" key="3">
    <source>
        <dbReference type="UniProtKB" id="P32309"/>
    </source>
</evidence>
<evidence type="ECO:0000250" key="4">
    <source>
        <dbReference type="UniProtKB" id="P35359"/>
    </source>
</evidence>
<evidence type="ECO:0000255" key="5"/>
<evidence type="ECO:0000255" key="6">
    <source>
        <dbReference type="PROSITE-ProRule" id="PRU00521"/>
    </source>
</evidence>
<accession>Q90305</accession>
<keyword id="KW-0966">Cell projection</keyword>
<keyword id="KW-0157">Chromophore</keyword>
<keyword id="KW-0297">G-protein coupled receptor</keyword>
<keyword id="KW-0325">Glycoprotein</keyword>
<keyword id="KW-0472">Membrane</keyword>
<keyword id="KW-0597">Phosphoprotein</keyword>
<keyword id="KW-0600">Photoreceptor protein</keyword>
<keyword id="KW-0675">Receptor</keyword>
<keyword id="KW-0681">Retinal protein</keyword>
<keyword id="KW-0716">Sensory transduction</keyword>
<keyword id="KW-0807">Transducer</keyword>
<keyword id="KW-0812">Transmembrane</keyword>
<keyword id="KW-1133">Transmembrane helix</keyword>
<keyword id="KW-0844">Vision</keyword>
<organism>
    <name type="scientific">Coregonus autumnalis</name>
    <name type="common">Arctic cisco</name>
    <name type="synonym">Salmo autumnalis</name>
    <dbReference type="NCBI Taxonomy" id="27773"/>
    <lineage>
        <taxon>Eukaryota</taxon>
        <taxon>Metazoa</taxon>
        <taxon>Chordata</taxon>
        <taxon>Craniata</taxon>
        <taxon>Vertebrata</taxon>
        <taxon>Euteleostomi</taxon>
        <taxon>Actinopterygii</taxon>
        <taxon>Neopterygii</taxon>
        <taxon>Teleostei</taxon>
        <taxon>Protacanthopterygii</taxon>
        <taxon>Salmoniformes</taxon>
        <taxon>Salmonidae</taxon>
        <taxon>Coregoninae</taxon>
        <taxon>Coregonus</taxon>
    </lineage>
</organism>
<proteinExistence type="inferred from homology"/>
<comment type="function">
    <text evidence="1 2 3">Photoreceptor required for image-forming vision at low light intensity. While most salt water fish species use retinal as chromophore, most freshwater fish use 3-dehydroretinal, or a mixture of retinal and 3-dehydroretinal (By similarity). Light-induced isomerization of 11-cis to all-trans retinal triggers a conformational change that activates signaling via G-proteins. Subsequent receptor phosphorylation mediates displacement of the bound G-protein alpha subunit by arrestin and terminates signaling (By similarity).</text>
</comment>
<comment type="subcellular location">
    <subcellularLocation>
        <location evidence="2">Membrane</location>
        <topology evidence="2">Multi-pass membrane protein</topology>
    </subcellularLocation>
    <subcellularLocation>
        <location evidence="4">Cell projection</location>
        <location evidence="4">Cilium</location>
        <location evidence="4">Photoreceptor outer segment</location>
    </subcellularLocation>
    <text evidence="2">Synthesized in the inner segment (IS) of rod photoreceptor cells before vectorial transport to disk membranes in the rod outer segment (OS) photosensory cilia.</text>
</comment>
<comment type="PTM">
    <text evidence="1">Phosphorylated on some or all of the serine and threonine residues present in the C-terminal region.</text>
</comment>
<comment type="PTM">
    <text evidence="1">Contains one covalently linked retinal chromophore.</text>
</comment>
<comment type="similarity">
    <text evidence="6">Belongs to the G-protein coupled receptor 1 family. Opsin subfamily.</text>
</comment>
<sequence length="131" mass="15037">CGIDYYTRAPGYNNESFVIYMFIVHFLIPLFIISFCYGNLLCAVKAAAAAQEESETTQRAEREVTRMVIMMVISYLVSWVPYASVAWYIFSNQGSEFGPVFMTIPAFFAKSSALYNPLIYVLMNKQFRHCM</sequence>
<protein>
    <recommendedName>
        <fullName>Rhodopsin</fullName>
    </recommendedName>
</protein>
<gene>
    <name type="primary">rho</name>
</gene>
<reference key="1">
    <citation type="journal article" date="1995" name="Gene">
        <title>The rhodopsin-encoding gene of bony fish lacks introns.</title>
        <authorList>
            <person name="Fitzgibbon J."/>
            <person name="Hope A."/>
            <person name="Slobodyanyuk S.J."/>
            <person name="Bellingham J."/>
            <person name="Bowmaker J.K."/>
            <person name="Hunt D.M."/>
        </authorList>
    </citation>
    <scope>NUCLEOTIDE SEQUENCE [GENOMIC DNA]</scope>
    <source>
        <tissue>Liver</tissue>
    </source>
</reference>